<reference key="1">
    <citation type="submission" date="2006-12" db="EMBL/GenBank/DDBJ databases">
        <title>Complete sequence of chromosome 1 of Verminephrobacter eiseniae EF01-2.</title>
        <authorList>
            <person name="Copeland A."/>
            <person name="Lucas S."/>
            <person name="Lapidus A."/>
            <person name="Barry K."/>
            <person name="Detter J.C."/>
            <person name="Glavina del Rio T."/>
            <person name="Dalin E."/>
            <person name="Tice H."/>
            <person name="Pitluck S."/>
            <person name="Chertkov O."/>
            <person name="Brettin T."/>
            <person name="Bruce D."/>
            <person name="Han C."/>
            <person name="Tapia R."/>
            <person name="Gilna P."/>
            <person name="Schmutz J."/>
            <person name="Larimer F."/>
            <person name="Land M."/>
            <person name="Hauser L."/>
            <person name="Kyrpides N."/>
            <person name="Kim E."/>
            <person name="Stahl D."/>
            <person name="Richardson P."/>
        </authorList>
    </citation>
    <scope>NUCLEOTIDE SEQUENCE [LARGE SCALE GENOMIC DNA]</scope>
    <source>
        <strain>EF01-2</strain>
    </source>
</reference>
<keyword id="KW-1185">Reference proteome</keyword>
<keyword id="KW-0678">Repressor</keyword>
<keyword id="KW-0346">Stress response</keyword>
<keyword id="KW-0804">Transcription</keyword>
<keyword id="KW-0805">Transcription regulation</keyword>
<proteinExistence type="inferred from homology"/>
<organism>
    <name type="scientific">Verminephrobacter eiseniae (strain EF01-2)</name>
    <dbReference type="NCBI Taxonomy" id="391735"/>
    <lineage>
        <taxon>Bacteria</taxon>
        <taxon>Pseudomonadati</taxon>
        <taxon>Pseudomonadota</taxon>
        <taxon>Betaproteobacteria</taxon>
        <taxon>Burkholderiales</taxon>
        <taxon>Comamonadaceae</taxon>
        <taxon>Verminephrobacter</taxon>
    </lineage>
</organism>
<name>HRCA_VEREI</name>
<gene>
    <name evidence="1" type="primary">hrcA</name>
    <name type="ordered locus">Veis_1050</name>
</gene>
<protein>
    <recommendedName>
        <fullName evidence="1">Heat-inducible transcription repressor HrcA</fullName>
    </recommendedName>
</protein>
<comment type="function">
    <text evidence="1">Negative regulator of class I heat shock genes (grpE-dnaK-dnaJ and groELS operons). Prevents heat-shock induction of these operons.</text>
</comment>
<comment type="similarity">
    <text evidence="1">Belongs to the HrcA family.</text>
</comment>
<accession>A1WGR9</accession>
<sequence>MLDDRAKLLLKALVERYIADGQPVGSRTLSQASGIDLSPATIRHVMADLEDLGLIASPHTSAGRRPTARGYRLFVDTMLTVQRDPLTAPELAPEQPQKVIANAAQLLSSLSQFVGVVIAPRRSSVFRHIEFLRLSERRFLVIIVSPEGDVQNRVIFTDIDYSQAQLIEASHFLNSHYTGLAMEQVRERLKSEVDMLRNEIAALMQAAVNVGSEALSDVQDEVVISGERNLLAVSDFSSDMDHLRRAFDLFEQKTQILRLLDISSQAQGVRIYIGGESQVVPFEELSVVSASYEVDGTMVGTLGVIGPTRMPYDRMIQIVDITSRLLSNALSHRK</sequence>
<dbReference type="EMBL" id="CP000542">
    <property type="protein sequence ID" value="ABM56826.1"/>
    <property type="molecule type" value="Genomic_DNA"/>
</dbReference>
<dbReference type="RefSeq" id="WP_011808838.1">
    <property type="nucleotide sequence ID" value="NC_008786.1"/>
</dbReference>
<dbReference type="SMR" id="A1WGR9"/>
<dbReference type="STRING" id="391735.Veis_1050"/>
<dbReference type="GeneID" id="76459726"/>
<dbReference type="KEGG" id="vei:Veis_1050"/>
<dbReference type="eggNOG" id="COG1420">
    <property type="taxonomic scope" value="Bacteria"/>
</dbReference>
<dbReference type="HOGENOM" id="CLU_050019_0_0_4"/>
<dbReference type="OrthoDB" id="9783139at2"/>
<dbReference type="Proteomes" id="UP000000374">
    <property type="component" value="Chromosome"/>
</dbReference>
<dbReference type="GO" id="GO:0003677">
    <property type="term" value="F:DNA binding"/>
    <property type="evidence" value="ECO:0007669"/>
    <property type="project" value="InterPro"/>
</dbReference>
<dbReference type="GO" id="GO:0045892">
    <property type="term" value="P:negative regulation of DNA-templated transcription"/>
    <property type="evidence" value="ECO:0007669"/>
    <property type="project" value="UniProtKB-UniRule"/>
</dbReference>
<dbReference type="Gene3D" id="3.30.450.40">
    <property type="match status" value="1"/>
</dbReference>
<dbReference type="Gene3D" id="3.30.390.60">
    <property type="entry name" value="Heat-inducible transcription repressor hrca homolog, domain 3"/>
    <property type="match status" value="1"/>
</dbReference>
<dbReference type="Gene3D" id="1.10.10.10">
    <property type="entry name" value="Winged helix-like DNA-binding domain superfamily/Winged helix DNA-binding domain"/>
    <property type="match status" value="1"/>
</dbReference>
<dbReference type="HAMAP" id="MF_00081">
    <property type="entry name" value="HrcA"/>
    <property type="match status" value="1"/>
</dbReference>
<dbReference type="InterPro" id="IPR029016">
    <property type="entry name" value="GAF-like_dom_sf"/>
</dbReference>
<dbReference type="InterPro" id="IPR002571">
    <property type="entry name" value="HrcA"/>
</dbReference>
<dbReference type="InterPro" id="IPR021153">
    <property type="entry name" value="HrcA_C"/>
</dbReference>
<dbReference type="InterPro" id="IPR036388">
    <property type="entry name" value="WH-like_DNA-bd_sf"/>
</dbReference>
<dbReference type="InterPro" id="IPR036390">
    <property type="entry name" value="WH_DNA-bd_sf"/>
</dbReference>
<dbReference type="InterPro" id="IPR005104">
    <property type="entry name" value="WHTH_HrcA_DNA-bd"/>
</dbReference>
<dbReference type="InterPro" id="IPR023120">
    <property type="entry name" value="WHTH_transcript_rep_HrcA_IDD"/>
</dbReference>
<dbReference type="NCBIfam" id="TIGR00331">
    <property type="entry name" value="hrcA"/>
    <property type="match status" value="1"/>
</dbReference>
<dbReference type="PANTHER" id="PTHR34824">
    <property type="entry name" value="HEAT-INDUCIBLE TRANSCRIPTION REPRESSOR HRCA"/>
    <property type="match status" value="1"/>
</dbReference>
<dbReference type="PANTHER" id="PTHR34824:SF1">
    <property type="entry name" value="HEAT-INDUCIBLE TRANSCRIPTION REPRESSOR HRCA"/>
    <property type="match status" value="1"/>
</dbReference>
<dbReference type="Pfam" id="PF01628">
    <property type="entry name" value="HrcA"/>
    <property type="match status" value="1"/>
</dbReference>
<dbReference type="Pfam" id="PF03444">
    <property type="entry name" value="HrcA_DNA-bdg"/>
    <property type="match status" value="1"/>
</dbReference>
<dbReference type="PIRSF" id="PIRSF005485">
    <property type="entry name" value="HrcA"/>
    <property type="match status" value="1"/>
</dbReference>
<dbReference type="SUPFAM" id="SSF55781">
    <property type="entry name" value="GAF domain-like"/>
    <property type="match status" value="1"/>
</dbReference>
<dbReference type="SUPFAM" id="SSF46785">
    <property type="entry name" value="Winged helix' DNA-binding domain"/>
    <property type="match status" value="1"/>
</dbReference>
<feature type="chain" id="PRO_1000118325" description="Heat-inducible transcription repressor HrcA">
    <location>
        <begin position="1"/>
        <end position="334"/>
    </location>
</feature>
<evidence type="ECO:0000255" key="1">
    <source>
        <dbReference type="HAMAP-Rule" id="MF_00081"/>
    </source>
</evidence>